<proteinExistence type="inferred from homology"/>
<protein>
    <recommendedName>
        <fullName evidence="1">Ribosome-recycling factor</fullName>
        <shortName evidence="1">RRF</shortName>
    </recommendedName>
    <alternativeName>
        <fullName evidence="1">Ribosome-releasing factor</fullName>
    </alternativeName>
</protein>
<organism>
    <name type="scientific">Oenococcus oeni (strain ATCC BAA-331 / PSU-1)</name>
    <dbReference type="NCBI Taxonomy" id="203123"/>
    <lineage>
        <taxon>Bacteria</taxon>
        <taxon>Bacillati</taxon>
        <taxon>Bacillota</taxon>
        <taxon>Bacilli</taxon>
        <taxon>Lactobacillales</taxon>
        <taxon>Lactobacillaceae</taxon>
        <taxon>Oenococcus</taxon>
    </lineage>
</organism>
<reference key="1">
    <citation type="journal article" date="2006" name="Proc. Natl. Acad. Sci. U.S.A.">
        <title>Comparative genomics of the lactic acid bacteria.</title>
        <authorList>
            <person name="Makarova K.S."/>
            <person name="Slesarev A."/>
            <person name="Wolf Y.I."/>
            <person name="Sorokin A."/>
            <person name="Mirkin B."/>
            <person name="Koonin E.V."/>
            <person name="Pavlov A."/>
            <person name="Pavlova N."/>
            <person name="Karamychev V."/>
            <person name="Polouchine N."/>
            <person name="Shakhova V."/>
            <person name="Grigoriev I."/>
            <person name="Lou Y."/>
            <person name="Rohksar D."/>
            <person name="Lucas S."/>
            <person name="Huang K."/>
            <person name="Goodstein D.M."/>
            <person name="Hawkins T."/>
            <person name="Plengvidhya V."/>
            <person name="Welker D."/>
            <person name="Hughes J."/>
            <person name="Goh Y."/>
            <person name="Benson A."/>
            <person name="Baldwin K."/>
            <person name="Lee J.-H."/>
            <person name="Diaz-Muniz I."/>
            <person name="Dosti B."/>
            <person name="Smeianov V."/>
            <person name="Wechter W."/>
            <person name="Barabote R."/>
            <person name="Lorca G."/>
            <person name="Altermann E."/>
            <person name="Barrangou R."/>
            <person name="Ganesan B."/>
            <person name="Xie Y."/>
            <person name="Rawsthorne H."/>
            <person name="Tamir D."/>
            <person name="Parker C."/>
            <person name="Breidt F."/>
            <person name="Broadbent J.R."/>
            <person name="Hutkins R."/>
            <person name="O'Sullivan D."/>
            <person name="Steele J."/>
            <person name="Unlu G."/>
            <person name="Saier M.H. Jr."/>
            <person name="Klaenhammer T."/>
            <person name="Richardson P."/>
            <person name="Kozyavkin S."/>
            <person name="Weimer B.C."/>
            <person name="Mills D.A."/>
        </authorList>
    </citation>
    <scope>NUCLEOTIDE SEQUENCE [LARGE SCALE GENOMIC DNA]</scope>
    <source>
        <strain>ATCC BAA-331 / PSU-1</strain>
    </source>
</reference>
<evidence type="ECO:0000255" key="1">
    <source>
        <dbReference type="HAMAP-Rule" id="MF_00040"/>
    </source>
</evidence>
<evidence type="ECO:0000256" key="2">
    <source>
        <dbReference type="SAM" id="MobiDB-lite"/>
    </source>
</evidence>
<feature type="chain" id="PRO_0000341026" description="Ribosome-recycling factor">
    <location>
        <begin position="1"/>
        <end position="180"/>
    </location>
</feature>
<feature type="region of interest" description="Disordered" evidence="2">
    <location>
        <begin position="135"/>
        <end position="156"/>
    </location>
</feature>
<sequence>MIDLKEVKERMGKVSKAFQNELINIRAGRANPNILNKIQVEYYGAPTPLNQLASVQIPEARVLLITPYDKTSLKAIEQAIFASDLGLTPQNDGSAIRLIIPQLTEDSRKELVKQVKAEAEKAKVAARNTRHDFMSDLKKDNDLSEDSRHRTEDDIQKATDLEIKDIDRIADIKEKELMEI</sequence>
<gene>
    <name evidence="1" type="primary">frr</name>
    <name type="ordered locus">OEOE_0978</name>
</gene>
<dbReference type="EMBL" id="CP000411">
    <property type="protein sequence ID" value="ABJ56887.1"/>
    <property type="molecule type" value="Genomic_DNA"/>
</dbReference>
<dbReference type="RefSeq" id="WP_002817104.1">
    <property type="nucleotide sequence ID" value="NC_008528.1"/>
</dbReference>
<dbReference type="SMR" id="Q04F85"/>
<dbReference type="STRING" id="203123.OEOE_0978"/>
<dbReference type="KEGG" id="ooe:OEOE_0978"/>
<dbReference type="eggNOG" id="COG0233">
    <property type="taxonomic scope" value="Bacteria"/>
</dbReference>
<dbReference type="HOGENOM" id="CLU_073981_2_0_9"/>
<dbReference type="Proteomes" id="UP000000774">
    <property type="component" value="Chromosome"/>
</dbReference>
<dbReference type="GO" id="GO:0005737">
    <property type="term" value="C:cytoplasm"/>
    <property type="evidence" value="ECO:0007669"/>
    <property type="project" value="UniProtKB-SubCell"/>
</dbReference>
<dbReference type="GO" id="GO:0043023">
    <property type="term" value="F:ribosomal large subunit binding"/>
    <property type="evidence" value="ECO:0007669"/>
    <property type="project" value="TreeGrafter"/>
</dbReference>
<dbReference type="GO" id="GO:0006415">
    <property type="term" value="P:translational termination"/>
    <property type="evidence" value="ECO:0007669"/>
    <property type="project" value="UniProtKB-UniRule"/>
</dbReference>
<dbReference type="CDD" id="cd00520">
    <property type="entry name" value="RRF"/>
    <property type="match status" value="1"/>
</dbReference>
<dbReference type="FunFam" id="1.10.132.20:FF:000001">
    <property type="entry name" value="Ribosome-recycling factor"/>
    <property type="match status" value="1"/>
</dbReference>
<dbReference type="FunFam" id="3.30.1360.40:FF:000001">
    <property type="entry name" value="Ribosome-recycling factor"/>
    <property type="match status" value="1"/>
</dbReference>
<dbReference type="Gene3D" id="3.30.1360.40">
    <property type="match status" value="1"/>
</dbReference>
<dbReference type="Gene3D" id="1.10.132.20">
    <property type="entry name" value="Ribosome-recycling factor"/>
    <property type="match status" value="1"/>
</dbReference>
<dbReference type="HAMAP" id="MF_00040">
    <property type="entry name" value="RRF"/>
    <property type="match status" value="1"/>
</dbReference>
<dbReference type="InterPro" id="IPR002661">
    <property type="entry name" value="Ribosome_recyc_fac"/>
</dbReference>
<dbReference type="InterPro" id="IPR023584">
    <property type="entry name" value="Ribosome_recyc_fac_dom"/>
</dbReference>
<dbReference type="InterPro" id="IPR036191">
    <property type="entry name" value="RRF_sf"/>
</dbReference>
<dbReference type="NCBIfam" id="TIGR00496">
    <property type="entry name" value="frr"/>
    <property type="match status" value="1"/>
</dbReference>
<dbReference type="PANTHER" id="PTHR20982:SF3">
    <property type="entry name" value="MITOCHONDRIAL RIBOSOME RECYCLING FACTOR PSEUDO 1"/>
    <property type="match status" value="1"/>
</dbReference>
<dbReference type="PANTHER" id="PTHR20982">
    <property type="entry name" value="RIBOSOME RECYCLING FACTOR"/>
    <property type="match status" value="1"/>
</dbReference>
<dbReference type="Pfam" id="PF01765">
    <property type="entry name" value="RRF"/>
    <property type="match status" value="1"/>
</dbReference>
<dbReference type="SUPFAM" id="SSF55194">
    <property type="entry name" value="Ribosome recycling factor, RRF"/>
    <property type="match status" value="1"/>
</dbReference>
<keyword id="KW-0963">Cytoplasm</keyword>
<keyword id="KW-0648">Protein biosynthesis</keyword>
<keyword id="KW-1185">Reference proteome</keyword>
<name>RRF_OENOB</name>
<accession>Q04F85</accession>
<comment type="function">
    <text evidence="1">Responsible for the release of ribosomes from messenger RNA at the termination of protein biosynthesis. May increase the efficiency of translation by recycling ribosomes from one round of translation to another.</text>
</comment>
<comment type="subcellular location">
    <subcellularLocation>
        <location evidence="1">Cytoplasm</location>
    </subcellularLocation>
</comment>
<comment type="similarity">
    <text evidence="1">Belongs to the RRF family.</text>
</comment>